<name>MHPD3_PSEPU</name>
<accession>Q706S1</accession>
<reference key="1">
    <citation type="journal article" date="1998" name="J. Bacteriol.">
        <title>Int-B13, an unusual site-specific recombinase of the bacteriophage P4 integrase family, is responsible for chromosomal insertion of the 105-kilobase clc element of Pseudomonas sp. Strain B13.</title>
        <authorList>
            <person name="Ravatn R."/>
            <person name="Studer S."/>
            <person name="Zehnder A.J."/>
            <person name="van der Meer J.R."/>
        </authorList>
    </citation>
    <scope>NUCLEOTIDE SEQUENCE [GENOMIC DNA]</scope>
    <source>
        <strain>Strain RR21</strain>
    </source>
</reference>
<reference key="2">
    <citation type="journal article" date="2003" name="Mol. Microbiol.">
        <title>Characterization of two alternative promoters and a transcription regulator for integrase expression in the clc catabolic genomic island of Pseudomonas sp. strain B13.</title>
        <authorList>
            <person name="Sentchilo V."/>
            <person name="Zehnder A.J."/>
            <person name="van der Meer J.R."/>
        </authorList>
    </citation>
    <scope>NUCLEOTIDE SEQUENCE [GENOMIC DNA]</scope>
    <source>
        <strain>Strain RR21</strain>
    </source>
</reference>
<reference key="3">
    <citation type="journal article" date="2006" name="J. Bacteriol.">
        <title>The clc element of Pseudomonas sp. strain B13, a genomic island with various catabolic properties.</title>
        <authorList>
            <person name="Gaillard M."/>
            <person name="Vallaeys T."/>
            <person name="Vorholter F.J."/>
            <person name="Minoia M."/>
            <person name="Werlen C."/>
            <person name="Sentchilo V."/>
            <person name="Puhler A."/>
            <person name="van der Meer J.R."/>
        </authorList>
    </citation>
    <scope>NUCLEOTIDE SEQUENCE [GENOMIC DNA]</scope>
    <source>
        <strain>Strain RR21</strain>
    </source>
</reference>
<feature type="chain" id="PRO_0000337799" description="2-keto-4-pentenoate hydratase 3">
    <location>
        <begin position="1"/>
        <end position="269"/>
    </location>
</feature>
<evidence type="ECO:0000255" key="1">
    <source>
        <dbReference type="HAMAP-Rule" id="MF_01655"/>
    </source>
</evidence>
<protein>
    <recommendedName>
        <fullName evidence="1">2-keto-4-pentenoate hydratase 3</fullName>
        <ecNumber evidence="1">4.2.1.80</ecNumber>
    </recommendedName>
    <alternativeName>
        <fullName evidence="1">2-hydroxypentadienoic acid hydratase 3</fullName>
    </alternativeName>
</protein>
<keyword id="KW-0058">Aromatic hydrocarbons catabolism</keyword>
<keyword id="KW-0456">Lyase</keyword>
<gene>
    <name evidence="1" type="primary">mhpD3</name>
</gene>
<organism>
    <name type="scientific">Pseudomonas putida</name>
    <name type="common">Arthrobacter siderocapsulatus</name>
    <dbReference type="NCBI Taxonomy" id="303"/>
    <lineage>
        <taxon>Bacteria</taxon>
        <taxon>Pseudomonadati</taxon>
        <taxon>Pseudomonadota</taxon>
        <taxon>Gammaproteobacteria</taxon>
        <taxon>Pseudomonadales</taxon>
        <taxon>Pseudomonadaceae</taxon>
        <taxon>Pseudomonas</taxon>
    </lineage>
</organism>
<dbReference type="EC" id="4.2.1.80" evidence="1"/>
<dbReference type="EMBL" id="AJ617740">
    <property type="protein sequence ID" value="CAE92879.1"/>
    <property type="molecule type" value="Genomic_DNA"/>
</dbReference>
<dbReference type="SMR" id="Q706S1"/>
<dbReference type="UniPathway" id="UPA00714"/>
<dbReference type="GO" id="GO:0005737">
    <property type="term" value="C:cytoplasm"/>
    <property type="evidence" value="ECO:0007669"/>
    <property type="project" value="TreeGrafter"/>
</dbReference>
<dbReference type="GO" id="GO:0008684">
    <property type="term" value="F:2-oxopent-4-enoate hydratase activity"/>
    <property type="evidence" value="ECO:0007669"/>
    <property type="project" value="UniProtKB-UniRule"/>
</dbReference>
<dbReference type="GO" id="GO:0030145">
    <property type="term" value="F:manganese ion binding"/>
    <property type="evidence" value="ECO:0007669"/>
    <property type="project" value="InterPro"/>
</dbReference>
<dbReference type="GO" id="GO:0019380">
    <property type="term" value="P:3-phenylpropionate catabolic process"/>
    <property type="evidence" value="ECO:0007669"/>
    <property type="project" value="UniProtKB-UniRule"/>
</dbReference>
<dbReference type="Gene3D" id="3.90.850.10">
    <property type="entry name" value="Fumarylacetoacetase-like, C-terminal domain"/>
    <property type="match status" value="1"/>
</dbReference>
<dbReference type="HAMAP" id="MF_01655">
    <property type="entry name" value="MhpD"/>
    <property type="match status" value="1"/>
</dbReference>
<dbReference type="InterPro" id="IPR011234">
    <property type="entry name" value="Fumarylacetoacetase-like_C"/>
</dbReference>
<dbReference type="InterPro" id="IPR036663">
    <property type="entry name" value="Fumarylacetoacetase_C_sf"/>
</dbReference>
<dbReference type="InterPro" id="IPR050772">
    <property type="entry name" value="Hydratase-Decarb/MhpD_sf"/>
</dbReference>
<dbReference type="InterPro" id="IPR023793">
    <property type="entry name" value="Keto_pentenoate-hydratase"/>
</dbReference>
<dbReference type="NCBIfam" id="NF008461">
    <property type="entry name" value="PRK11342.1"/>
    <property type="match status" value="1"/>
</dbReference>
<dbReference type="PANTHER" id="PTHR30143:SF0">
    <property type="entry name" value="2-KETO-4-PENTENOATE HYDRATASE"/>
    <property type="match status" value="1"/>
</dbReference>
<dbReference type="PANTHER" id="PTHR30143">
    <property type="entry name" value="ACID HYDRATASE"/>
    <property type="match status" value="1"/>
</dbReference>
<dbReference type="Pfam" id="PF01557">
    <property type="entry name" value="FAA_hydrolase"/>
    <property type="match status" value="1"/>
</dbReference>
<dbReference type="SUPFAM" id="SSF56529">
    <property type="entry name" value="FAH"/>
    <property type="match status" value="1"/>
</dbReference>
<comment type="function">
    <text evidence="1">Catalyzes the conversion of 2-hydroxypentadienoic acid (enolic form of 2-oxopent-4-enoate) to 4-hydroxy-2-ketopentanoic acid.</text>
</comment>
<comment type="catalytic activity">
    <reaction evidence="1">
        <text>(S)-4-hydroxy-2-oxopentanoate = (2Z)-2-hydroxypenta-2,4-dienoate + H2O</text>
        <dbReference type="Rhea" id="RHEA:22580"/>
        <dbReference type="ChEBI" id="CHEBI:15377"/>
        <dbReference type="ChEBI" id="CHEBI:67152"/>
        <dbReference type="ChEBI" id="CHEBI:73143"/>
        <dbReference type="EC" id="4.2.1.80"/>
    </reaction>
</comment>
<comment type="cofactor">
    <cofactor evidence="1">
        <name>a divalent metal cation</name>
        <dbReference type="ChEBI" id="CHEBI:60240"/>
    </cofactor>
</comment>
<comment type="pathway">
    <text evidence="1">Aromatic compound metabolism; 3-phenylpropanoate degradation.</text>
</comment>
<comment type="similarity">
    <text evidence="1">Belongs to the hydratase/decarboxylase family. MhpD subfamily.</text>
</comment>
<sequence length="269" mass="28759">MTPQQREEAAQSLYQAMQSGKPIAPLRDTFPDMNVDDAYAIQSINTQRRISLGRRVVGRKIGLTSVVVQQQLGVDEPDFGALFDDMSFGDAETIPLSILHQPKVEAEIGFVLGRDLDTEQPTHQEVLQAVDYVVPALEIVGSRIADWNIKFVDTVADNASSGVYVLGSTPISPRGLDLSLVGMCLSRRGEPVSTGAGAACLGTPLNAVVWLARTMSRLGKPLRAGELILSGALGPMVAVKPGDVFECHINGVGSVRTEFESNQMNGVAA</sequence>
<proteinExistence type="inferred from homology"/>